<protein>
    <recommendedName>
        <fullName>Ankyrin repeat domain-containing protein 65</fullName>
    </recommendedName>
</protein>
<gene>
    <name type="primary">ANKRD65</name>
</gene>
<dbReference type="EMBL" id="AAFC03061754">
    <property type="status" value="NOT_ANNOTATED_CDS"/>
    <property type="molecule type" value="Genomic_DNA"/>
</dbReference>
<dbReference type="EMBL" id="BC149278">
    <property type="protein sequence ID" value="AAI49279.1"/>
    <property type="molecule type" value="mRNA"/>
</dbReference>
<dbReference type="RefSeq" id="NP_001095819.1">
    <property type="nucleotide sequence ID" value="NM_001102349.1"/>
</dbReference>
<dbReference type="SMR" id="A6QPE7"/>
<dbReference type="STRING" id="9913.ENSBTAP00000051383"/>
<dbReference type="PaxDb" id="9913-ENSBTAP00000051383"/>
<dbReference type="Ensembl" id="ENSBTAT00000056210.2">
    <property type="protein sequence ID" value="ENSBTAP00000051383.1"/>
    <property type="gene ID" value="ENSBTAG00000039055.3"/>
</dbReference>
<dbReference type="GeneID" id="788407"/>
<dbReference type="KEGG" id="bta:788407"/>
<dbReference type="CTD" id="441869"/>
<dbReference type="VEuPathDB" id="HostDB:ENSBTAG00000039055"/>
<dbReference type="VGNC" id="VGNC:25941">
    <property type="gene designation" value="ANKRD65"/>
</dbReference>
<dbReference type="eggNOG" id="KOG4177">
    <property type="taxonomic scope" value="Eukaryota"/>
</dbReference>
<dbReference type="GeneTree" id="ENSGT00940000163707"/>
<dbReference type="HOGENOM" id="CLU_000134_48_5_1"/>
<dbReference type="InParanoid" id="A6QPE7"/>
<dbReference type="OMA" id="TRWGDMA"/>
<dbReference type="OrthoDB" id="20872at2759"/>
<dbReference type="TreeFam" id="TF329520"/>
<dbReference type="Proteomes" id="UP000009136">
    <property type="component" value="Chromosome 16"/>
</dbReference>
<dbReference type="Bgee" id="ENSBTAG00000039055">
    <property type="expression patterns" value="Expressed in olfactory segment of nasal mucosa and 45 other cell types or tissues"/>
</dbReference>
<dbReference type="Gene3D" id="1.25.40.20">
    <property type="entry name" value="Ankyrin repeat-containing domain"/>
    <property type="match status" value="4"/>
</dbReference>
<dbReference type="InterPro" id="IPR002110">
    <property type="entry name" value="Ankyrin_rpt"/>
</dbReference>
<dbReference type="InterPro" id="IPR036770">
    <property type="entry name" value="Ankyrin_rpt-contain_sf"/>
</dbReference>
<dbReference type="PANTHER" id="PTHR24173">
    <property type="entry name" value="ANKYRIN REPEAT CONTAINING"/>
    <property type="match status" value="1"/>
</dbReference>
<dbReference type="PANTHER" id="PTHR24173:SF74">
    <property type="entry name" value="ANKYRIN REPEAT DOMAIN-CONTAINING PROTEIN 16"/>
    <property type="match status" value="1"/>
</dbReference>
<dbReference type="Pfam" id="PF00023">
    <property type="entry name" value="Ank"/>
    <property type="match status" value="1"/>
</dbReference>
<dbReference type="Pfam" id="PF12796">
    <property type="entry name" value="Ank_2"/>
    <property type="match status" value="2"/>
</dbReference>
<dbReference type="PRINTS" id="PR01415">
    <property type="entry name" value="ANKYRIN"/>
</dbReference>
<dbReference type="SMART" id="SM00248">
    <property type="entry name" value="ANK"/>
    <property type="match status" value="10"/>
</dbReference>
<dbReference type="SUPFAM" id="SSF48403">
    <property type="entry name" value="Ankyrin repeat"/>
    <property type="match status" value="1"/>
</dbReference>
<dbReference type="PROSITE" id="PS50297">
    <property type="entry name" value="ANK_REP_REGION"/>
    <property type="match status" value="1"/>
</dbReference>
<dbReference type="PROSITE" id="PS50088">
    <property type="entry name" value="ANK_REPEAT"/>
    <property type="match status" value="7"/>
</dbReference>
<name>ANR65_BOVIN</name>
<accession>A6QPE7</accession>
<sequence>MPDSCCFQMDSGVSEPGEQDLTEAGAEQELRWLDLGSEEALGAGTQGPSTPQAWGHLLQAVWKGHTGLVTQLLRQGASVEERDGAGRTPLHLAVLRGHVSLVRLLLQRGAQVGAADRAGRTPLHEAAWHGPSRVAELLLRRGAPANARCLAGLTPLHWAAALGRTLMVGHLLAAPHPGPTAADARGWTAGHWAAAGGQMAVLELLGANGGARLDSVLLVAAAAGRATALRLLLAQGAPVDARDGVGATVLGVAAGLGRRQDMEVLLEHGADPSLTDRHGRSALHRAAAGGHLLAVQLLAAWGAEVDSQDLLGLTPLHHAARGGHIEVTGHLLDRGAEINAAGWLHKTPLHLAMEHGHGPTAELLLSRGASPTLRTRWGDMAQDLWPALCGEQEES</sequence>
<reference key="1">
    <citation type="journal article" date="2009" name="Science">
        <title>The genome sequence of taurine cattle: a window to ruminant biology and evolution.</title>
        <authorList>
            <consortium name="The bovine genome sequencing and analysis consortium"/>
        </authorList>
    </citation>
    <scope>NUCLEOTIDE SEQUENCE [LARGE SCALE GENOMIC DNA]</scope>
    <source>
        <strain>Hereford</strain>
    </source>
</reference>
<reference key="2">
    <citation type="submission" date="2005-07" db="EMBL/GenBank/DDBJ databases">
        <authorList>
            <consortium name="NIH - Mammalian Gene Collection (MGC) project"/>
        </authorList>
    </citation>
    <scope>NUCLEOTIDE SEQUENCE [LARGE SCALE MRNA]</scope>
    <source>
        <strain>Hereford</strain>
        <tissue>Fetal pons</tissue>
    </source>
</reference>
<organism>
    <name type="scientific">Bos taurus</name>
    <name type="common">Bovine</name>
    <dbReference type="NCBI Taxonomy" id="9913"/>
    <lineage>
        <taxon>Eukaryota</taxon>
        <taxon>Metazoa</taxon>
        <taxon>Chordata</taxon>
        <taxon>Craniata</taxon>
        <taxon>Vertebrata</taxon>
        <taxon>Euteleostomi</taxon>
        <taxon>Mammalia</taxon>
        <taxon>Eutheria</taxon>
        <taxon>Laurasiatheria</taxon>
        <taxon>Artiodactyla</taxon>
        <taxon>Ruminantia</taxon>
        <taxon>Pecora</taxon>
        <taxon>Bovidae</taxon>
        <taxon>Bovinae</taxon>
        <taxon>Bos</taxon>
    </lineage>
</organism>
<feature type="chain" id="PRO_0000414483" description="Ankyrin repeat domain-containing protein 65">
    <location>
        <begin position="1"/>
        <end position="395"/>
    </location>
</feature>
<feature type="repeat" description="ANK 1">
    <location>
        <begin position="52"/>
        <end position="81"/>
    </location>
</feature>
<feature type="repeat" description="ANK 2">
    <location>
        <begin position="85"/>
        <end position="114"/>
    </location>
</feature>
<feature type="repeat" description="ANK 3">
    <location>
        <begin position="118"/>
        <end position="147"/>
    </location>
</feature>
<feature type="repeat" description="ANK 4">
    <location>
        <begin position="151"/>
        <end position="180"/>
    </location>
</feature>
<feature type="repeat" description="ANK 5">
    <location>
        <begin position="185"/>
        <end position="212"/>
    </location>
</feature>
<feature type="repeat" description="ANK 6">
    <location>
        <begin position="213"/>
        <end position="241"/>
    </location>
</feature>
<feature type="repeat" description="ANK 7">
    <location>
        <begin position="245"/>
        <end position="274"/>
    </location>
</feature>
<feature type="repeat" description="ANK 8">
    <location>
        <begin position="278"/>
        <end position="307"/>
    </location>
</feature>
<feature type="repeat" description="ANK 9">
    <location>
        <begin position="311"/>
        <end position="340"/>
    </location>
</feature>
<feature type="repeat" description="ANK 10">
    <location>
        <begin position="344"/>
        <end position="373"/>
    </location>
</feature>
<proteinExistence type="evidence at transcript level"/>
<keyword id="KW-0040">ANK repeat</keyword>
<keyword id="KW-1185">Reference proteome</keyword>
<keyword id="KW-0677">Repeat</keyword>